<gene>
    <name evidence="1" type="primary">mutS</name>
    <name type="ordered locus">ACICU_01240</name>
</gene>
<dbReference type="EMBL" id="CP000863">
    <property type="protein sequence ID" value="ACC56552.1"/>
    <property type="molecule type" value="Genomic_DNA"/>
</dbReference>
<dbReference type="RefSeq" id="WP_001083258.1">
    <property type="nucleotide sequence ID" value="NZ_CP031380.1"/>
</dbReference>
<dbReference type="SMR" id="B2HX50"/>
<dbReference type="KEGG" id="abc:ACICU_01240"/>
<dbReference type="HOGENOM" id="CLU_002472_4_0_6"/>
<dbReference type="Proteomes" id="UP000008839">
    <property type="component" value="Chromosome"/>
</dbReference>
<dbReference type="GO" id="GO:0005829">
    <property type="term" value="C:cytosol"/>
    <property type="evidence" value="ECO:0007669"/>
    <property type="project" value="TreeGrafter"/>
</dbReference>
<dbReference type="GO" id="GO:0005524">
    <property type="term" value="F:ATP binding"/>
    <property type="evidence" value="ECO:0007669"/>
    <property type="project" value="UniProtKB-UniRule"/>
</dbReference>
<dbReference type="GO" id="GO:0140664">
    <property type="term" value="F:ATP-dependent DNA damage sensor activity"/>
    <property type="evidence" value="ECO:0007669"/>
    <property type="project" value="InterPro"/>
</dbReference>
<dbReference type="GO" id="GO:0003684">
    <property type="term" value="F:damaged DNA binding"/>
    <property type="evidence" value="ECO:0007669"/>
    <property type="project" value="UniProtKB-UniRule"/>
</dbReference>
<dbReference type="GO" id="GO:0030983">
    <property type="term" value="F:mismatched DNA binding"/>
    <property type="evidence" value="ECO:0007669"/>
    <property type="project" value="InterPro"/>
</dbReference>
<dbReference type="GO" id="GO:0006298">
    <property type="term" value="P:mismatch repair"/>
    <property type="evidence" value="ECO:0007669"/>
    <property type="project" value="UniProtKB-UniRule"/>
</dbReference>
<dbReference type="FunFam" id="1.10.1420.10:FF:000002">
    <property type="entry name" value="DNA mismatch repair protein MutS"/>
    <property type="match status" value="1"/>
</dbReference>
<dbReference type="FunFam" id="3.40.1170.10:FF:000001">
    <property type="entry name" value="DNA mismatch repair protein MutS"/>
    <property type="match status" value="1"/>
</dbReference>
<dbReference type="FunFam" id="3.40.50.300:FF:000870">
    <property type="entry name" value="MutS protein homolog 4"/>
    <property type="match status" value="1"/>
</dbReference>
<dbReference type="Gene3D" id="1.10.1420.10">
    <property type="match status" value="2"/>
</dbReference>
<dbReference type="Gene3D" id="6.10.140.430">
    <property type="match status" value="1"/>
</dbReference>
<dbReference type="Gene3D" id="3.40.1170.10">
    <property type="entry name" value="DNA repair protein MutS, domain I"/>
    <property type="match status" value="1"/>
</dbReference>
<dbReference type="Gene3D" id="3.30.420.110">
    <property type="entry name" value="MutS, connector domain"/>
    <property type="match status" value="1"/>
</dbReference>
<dbReference type="Gene3D" id="3.40.50.300">
    <property type="entry name" value="P-loop containing nucleotide triphosphate hydrolases"/>
    <property type="match status" value="1"/>
</dbReference>
<dbReference type="HAMAP" id="MF_00096">
    <property type="entry name" value="MutS"/>
    <property type="match status" value="1"/>
</dbReference>
<dbReference type="InterPro" id="IPR005748">
    <property type="entry name" value="DNA_mismatch_repair_MutS"/>
</dbReference>
<dbReference type="InterPro" id="IPR007695">
    <property type="entry name" value="DNA_mismatch_repair_MutS-lik_N"/>
</dbReference>
<dbReference type="InterPro" id="IPR017261">
    <property type="entry name" value="DNA_mismatch_repair_MutS/MSH"/>
</dbReference>
<dbReference type="InterPro" id="IPR000432">
    <property type="entry name" value="DNA_mismatch_repair_MutS_C"/>
</dbReference>
<dbReference type="InterPro" id="IPR007861">
    <property type="entry name" value="DNA_mismatch_repair_MutS_clamp"/>
</dbReference>
<dbReference type="InterPro" id="IPR007696">
    <property type="entry name" value="DNA_mismatch_repair_MutS_core"/>
</dbReference>
<dbReference type="InterPro" id="IPR016151">
    <property type="entry name" value="DNA_mismatch_repair_MutS_N"/>
</dbReference>
<dbReference type="InterPro" id="IPR036187">
    <property type="entry name" value="DNA_mismatch_repair_MutS_sf"/>
</dbReference>
<dbReference type="InterPro" id="IPR007860">
    <property type="entry name" value="DNA_mmatch_repair_MutS_con_dom"/>
</dbReference>
<dbReference type="InterPro" id="IPR045076">
    <property type="entry name" value="MutS"/>
</dbReference>
<dbReference type="InterPro" id="IPR036678">
    <property type="entry name" value="MutS_con_dom_sf"/>
</dbReference>
<dbReference type="InterPro" id="IPR027417">
    <property type="entry name" value="P-loop_NTPase"/>
</dbReference>
<dbReference type="NCBIfam" id="TIGR01070">
    <property type="entry name" value="mutS1"/>
    <property type="match status" value="1"/>
</dbReference>
<dbReference type="NCBIfam" id="NF003810">
    <property type="entry name" value="PRK05399.1"/>
    <property type="match status" value="1"/>
</dbReference>
<dbReference type="PANTHER" id="PTHR11361:SF34">
    <property type="entry name" value="DNA MISMATCH REPAIR PROTEIN MSH1, MITOCHONDRIAL"/>
    <property type="match status" value="1"/>
</dbReference>
<dbReference type="PANTHER" id="PTHR11361">
    <property type="entry name" value="DNA MISMATCH REPAIR PROTEIN MUTS FAMILY MEMBER"/>
    <property type="match status" value="1"/>
</dbReference>
<dbReference type="Pfam" id="PF01624">
    <property type="entry name" value="MutS_I"/>
    <property type="match status" value="1"/>
</dbReference>
<dbReference type="Pfam" id="PF05188">
    <property type="entry name" value="MutS_II"/>
    <property type="match status" value="1"/>
</dbReference>
<dbReference type="Pfam" id="PF05192">
    <property type="entry name" value="MutS_III"/>
    <property type="match status" value="1"/>
</dbReference>
<dbReference type="Pfam" id="PF05190">
    <property type="entry name" value="MutS_IV"/>
    <property type="match status" value="1"/>
</dbReference>
<dbReference type="Pfam" id="PF00488">
    <property type="entry name" value="MutS_V"/>
    <property type="match status" value="1"/>
</dbReference>
<dbReference type="PIRSF" id="PIRSF037677">
    <property type="entry name" value="DNA_mis_repair_Msh6"/>
    <property type="match status" value="1"/>
</dbReference>
<dbReference type="SMART" id="SM00534">
    <property type="entry name" value="MUTSac"/>
    <property type="match status" value="1"/>
</dbReference>
<dbReference type="SMART" id="SM00533">
    <property type="entry name" value="MUTSd"/>
    <property type="match status" value="1"/>
</dbReference>
<dbReference type="SUPFAM" id="SSF55271">
    <property type="entry name" value="DNA repair protein MutS, domain I"/>
    <property type="match status" value="1"/>
</dbReference>
<dbReference type="SUPFAM" id="SSF53150">
    <property type="entry name" value="DNA repair protein MutS, domain II"/>
    <property type="match status" value="1"/>
</dbReference>
<dbReference type="SUPFAM" id="SSF48334">
    <property type="entry name" value="DNA repair protein MutS, domain III"/>
    <property type="match status" value="1"/>
</dbReference>
<dbReference type="SUPFAM" id="SSF52540">
    <property type="entry name" value="P-loop containing nucleoside triphosphate hydrolases"/>
    <property type="match status" value="1"/>
</dbReference>
<dbReference type="PROSITE" id="PS00486">
    <property type="entry name" value="DNA_MISMATCH_REPAIR_2"/>
    <property type="match status" value="1"/>
</dbReference>
<proteinExistence type="inferred from homology"/>
<comment type="function">
    <text evidence="1">This protein is involved in the repair of mismatches in DNA. It is possible that it carries out the mismatch recognition step. This protein has a weak ATPase activity.</text>
</comment>
<comment type="similarity">
    <text evidence="1">Belongs to the DNA mismatch repair MutS family.</text>
</comment>
<keyword id="KW-0067">ATP-binding</keyword>
<keyword id="KW-0227">DNA damage</keyword>
<keyword id="KW-0234">DNA repair</keyword>
<keyword id="KW-0238">DNA-binding</keyword>
<keyword id="KW-0547">Nucleotide-binding</keyword>
<organism>
    <name type="scientific">Acinetobacter baumannii (strain ACICU)</name>
    <dbReference type="NCBI Taxonomy" id="405416"/>
    <lineage>
        <taxon>Bacteria</taxon>
        <taxon>Pseudomonadati</taxon>
        <taxon>Pseudomonadota</taxon>
        <taxon>Gammaproteobacteria</taxon>
        <taxon>Moraxellales</taxon>
        <taxon>Moraxellaceae</taxon>
        <taxon>Acinetobacter</taxon>
        <taxon>Acinetobacter calcoaceticus/baumannii complex</taxon>
    </lineage>
</organism>
<evidence type="ECO:0000255" key="1">
    <source>
        <dbReference type="HAMAP-Rule" id="MF_00096"/>
    </source>
</evidence>
<name>MUTS_ACIBC</name>
<protein>
    <recommendedName>
        <fullName evidence="1">DNA mismatch repair protein MutS</fullName>
    </recommendedName>
</protein>
<reference key="1">
    <citation type="journal article" date="2008" name="Antimicrob. Agents Chemother.">
        <title>Whole-genome pyrosequencing of an epidemic multidrug-resistant Acinetobacter baumannii strain belonging to the European clone II group.</title>
        <authorList>
            <person name="Iacono M."/>
            <person name="Villa L."/>
            <person name="Fortini D."/>
            <person name="Bordoni R."/>
            <person name="Imperi F."/>
            <person name="Bonnal R.J."/>
            <person name="Sicheritz-Ponten T."/>
            <person name="De Bellis G."/>
            <person name="Visca P."/>
            <person name="Cassone A."/>
            <person name="Carattoli A."/>
        </authorList>
    </citation>
    <scope>NUCLEOTIDE SEQUENCE [LARGE SCALE GENOMIC DNA]</scope>
    <source>
        <strain>ACICU</strain>
    </source>
</reference>
<sequence length="881" mass="97893">MNSAEIMADLSNHTPMMQQYLKVKKDYQHALLFYRMGDFYELFFEDAHLAAKLLGITLTHRGKANGNPIPMAGVPYHSAEGYLARLVKAGRTVAICEQVGEVTGKGPVERKVVRILTPGTLTDDALLTSYQSSNLVALCIHQNQIGFALLDLSAGIFKVQQQDYKPEQLPIELARLMPSEILIDEDLVDPNIIEQIKKHLDCPVTKRPNVDFNLNNAQKTLCDQFSVSTLSGFGLDPLPLAKAAAAALIHYAKETQKTALPHIRSILLEQSSDFIALDPITRRNLEIIEPLFEHGTSLFQLVNDCQTAMGGRLLSRTLMQPVRDTALLDARLDAIEQLIQGYHESPVRLVLKEIGDIERVLSRVALGSARPRDLVQLRHACAQIPFLRNALAPVVQAKKSKLLGQLDQELGDFKSLHQHLMAAIVENPPVLLRDGNVIAEGYDAELDELRQIRDHAGQFLIDLEIKERERTGISTLKIGYNRVSGYYIELTRAQAEQAPADYIRRQTLKNAERYITPELKSFEDKVLSSESRALAREKALFEALLENLRENIAHLQMMSSAIAQIDVIANFAHQARLNNWARPEFTPETGIKIQGGRHPVVEALSKAPFTPNDTFLDVQHRMAIITGPNMGGKSTFMRQTALISLLAYCGSYVPARAAKLGPIDRIFTRIGSADDLSTGKSTFMVEMTETSQILHHATNQSLVLMDEVGRGTSTYDGLSLAWACVVDLTKRVKCLCLFATHYFELTELGSEPGIDNYHVTAQELNGNLILLHKVQQGPASQSHGLQVAKLAGIPANVIKEAQKRLRILEKQQQQHLQTSVQSDLFATLDSEVTPSTQVIEKVIEVEVSSPALDLLKQIEVDNLTPRQALEQLYELKAALNS</sequence>
<accession>B2HX50</accession>
<feature type="chain" id="PRO_1000093601" description="DNA mismatch repair protein MutS">
    <location>
        <begin position="1"/>
        <end position="881"/>
    </location>
</feature>
<feature type="binding site" evidence="1">
    <location>
        <begin position="627"/>
        <end position="634"/>
    </location>
    <ligand>
        <name>ATP</name>
        <dbReference type="ChEBI" id="CHEBI:30616"/>
    </ligand>
</feature>